<name>GUAAA_SACS2</name>
<gene>
    <name evidence="1" type="primary">guaAA</name>
    <name type="synonym">guaA</name>
    <name type="ordered locus">SSO2451</name>
</gene>
<accession>Q97VZ9</accession>
<proteinExistence type="inferred from homology"/>
<organism>
    <name type="scientific">Saccharolobus solfataricus (strain ATCC 35092 / DSM 1617 / JCM 11322 / P2)</name>
    <name type="common">Sulfolobus solfataricus</name>
    <dbReference type="NCBI Taxonomy" id="273057"/>
    <lineage>
        <taxon>Archaea</taxon>
        <taxon>Thermoproteota</taxon>
        <taxon>Thermoprotei</taxon>
        <taxon>Sulfolobales</taxon>
        <taxon>Sulfolobaceae</taxon>
        <taxon>Saccharolobus</taxon>
    </lineage>
</organism>
<dbReference type="EC" id="6.3.5.2" evidence="1"/>
<dbReference type="EMBL" id="AE006641">
    <property type="protein sequence ID" value="AAK42591.1"/>
    <property type="molecule type" value="Genomic_DNA"/>
</dbReference>
<dbReference type="PIR" id="H90416">
    <property type="entry name" value="H90416"/>
</dbReference>
<dbReference type="RefSeq" id="WP_010923859.1">
    <property type="nucleotide sequence ID" value="NC_002754.1"/>
</dbReference>
<dbReference type="SMR" id="Q97VZ9"/>
<dbReference type="FunCoup" id="Q97VZ9">
    <property type="interactions" value="45"/>
</dbReference>
<dbReference type="STRING" id="273057.SSO2451"/>
<dbReference type="MEROPS" id="C26.A31"/>
<dbReference type="PaxDb" id="273057-SSO2451"/>
<dbReference type="EnsemblBacteria" id="AAK42591">
    <property type="protein sequence ID" value="AAK42591"/>
    <property type="gene ID" value="SSO2451"/>
</dbReference>
<dbReference type="GeneID" id="12417133"/>
<dbReference type="KEGG" id="sso:SSO2451"/>
<dbReference type="PATRIC" id="fig|273057.12.peg.2529"/>
<dbReference type="eggNOG" id="arCOG00087">
    <property type="taxonomic scope" value="Archaea"/>
</dbReference>
<dbReference type="HOGENOM" id="CLU_014340_1_4_2"/>
<dbReference type="InParanoid" id="Q97VZ9"/>
<dbReference type="PhylomeDB" id="Q97VZ9"/>
<dbReference type="UniPathway" id="UPA00189">
    <property type="reaction ID" value="UER00296"/>
</dbReference>
<dbReference type="Proteomes" id="UP000001974">
    <property type="component" value="Chromosome"/>
</dbReference>
<dbReference type="GO" id="GO:0005524">
    <property type="term" value="F:ATP binding"/>
    <property type="evidence" value="ECO:0007669"/>
    <property type="project" value="UniProtKB-KW"/>
</dbReference>
<dbReference type="GO" id="GO:0003922">
    <property type="term" value="F:GMP synthase (glutamine-hydrolyzing) activity"/>
    <property type="evidence" value="ECO:0007669"/>
    <property type="project" value="UniProtKB-UniRule"/>
</dbReference>
<dbReference type="CDD" id="cd01742">
    <property type="entry name" value="GATase1_GMP_Synthase"/>
    <property type="match status" value="1"/>
</dbReference>
<dbReference type="FunFam" id="3.40.50.880:FF:000047">
    <property type="entry name" value="GMP synthase [glutamine-hydrolyzing] subunit A"/>
    <property type="match status" value="1"/>
</dbReference>
<dbReference type="Gene3D" id="3.40.50.880">
    <property type="match status" value="1"/>
</dbReference>
<dbReference type="HAMAP" id="MF_01510">
    <property type="entry name" value="GMP_synthase_A"/>
    <property type="match status" value="1"/>
</dbReference>
<dbReference type="InterPro" id="IPR029062">
    <property type="entry name" value="Class_I_gatase-like"/>
</dbReference>
<dbReference type="InterPro" id="IPR017926">
    <property type="entry name" value="GATASE"/>
</dbReference>
<dbReference type="InterPro" id="IPR004739">
    <property type="entry name" value="GMP_synth_GATase"/>
</dbReference>
<dbReference type="InterPro" id="IPR023686">
    <property type="entry name" value="GMP_synthase_A"/>
</dbReference>
<dbReference type="NCBIfam" id="TIGR00888">
    <property type="entry name" value="guaA_Nterm"/>
    <property type="match status" value="1"/>
</dbReference>
<dbReference type="NCBIfam" id="NF001975">
    <property type="entry name" value="PRK00758.1"/>
    <property type="match status" value="1"/>
</dbReference>
<dbReference type="PANTHER" id="PTHR11922:SF2">
    <property type="entry name" value="GMP SYNTHASE [GLUTAMINE-HYDROLYZING]"/>
    <property type="match status" value="1"/>
</dbReference>
<dbReference type="PANTHER" id="PTHR11922">
    <property type="entry name" value="GMP SYNTHASE-RELATED"/>
    <property type="match status" value="1"/>
</dbReference>
<dbReference type="Pfam" id="PF00117">
    <property type="entry name" value="GATase"/>
    <property type="match status" value="1"/>
</dbReference>
<dbReference type="PRINTS" id="PR00097">
    <property type="entry name" value="ANTSNTHASEII"/>
</dbReference>
<dbReference type="PRINTS" id="PR00099">
    <property type="entry name" value="CPSGATASE"/>
</dbReference>
<dbReference type="PRINTS" id="PR00096">
    <property type="entry name" value="GATASE"/>
</dbReference>
<dbReference type="SUPFAM" id="SSF52317">
    <property type="entry name" value="Class I glutamine amidotransferase-like"/>
    <property type="match status" value="1"/>
</dbReference>
<dbReference type="PROSITE" id="PS51273">
    <property type="entry name" value="GATASE_TYPE_1"/>
    <property type="match status" value="1"/>
</dbReference>
<feature type="chain" id="PRO_0000140233" description="GMP synthase [glutamine-hydrolyzing] subunit A">
    <location>
        <begin position="1"/>
        <end position="188"/>
    </location>
</feature>
<feature type="domain" description="Glutamine amidotransferase type-1" evidence="1">
    <location>
        <begin position="2"/>
        <end position="188"/>
    </location>
</feature>
<feature type="active site" description="Nucleophile" evidence="1">
    <location>
        <position position="79"/>
    </location>
</feature>
<feature type="active site" evidence="1">
    <location>
        <position position="166"/>
    </location>
</feature>
<feature type="active site" evidence="1">
    <location>
        <position position="168"/>
    </location>
</feature>
<protein>
    <recommendedName>
        <fullName evidence="1">GMP synthase [glutamine-hydrolyzing] subunit A</fullName>
        <ecNumber evidence="1">6.3.5.2</ecNumber>
    </recommendedName>
    <alternativeName>
        <fullName evidence="1">Glutamine amidotransferase</fullName>
    </alternativeName>
</protein>
<comment type="function">
    <text evidence="1">Catalyzes the synthesis of GMP from XMP.</text>
</comment>
<comment type="catalytic activity">
    <reaction evidence="1">
        <text>XMP + L-glutamine + ATP + H2O = GMP + L-glutamate + AMP + diphosphate + 2 H(+)</text>
        <dbReference type="Rhea" id="RHEA:11680"/>
        <dbReference type="ChEBI" id="CHEBI:15377"/>
        <dbReference type="ChEBI" id="CHEBI:15378"/>
        <dbReference type="ChEBI" id="CHEBI:29985"/>
        <dbReference type="ChEBI" id="CHEBI:30616"/>
        <dbReference type="ChEBI" id="CHEBI:33019"/>
        <dbReference type="ChEBI" id="CHEBI:57464"/>
        <dbReference type="ChEBI" id="CHEBI:58115"/>
        <dbReference type="ChEBI" id="CHEBI:58359"/>
        <dbReference type="ChEBI" id="CHEBI:456215"/>
        <dbReference type="EC" id="6.3.5.2"/>
    </reaction>
</comment>
<comment type="pathway">
    <text evidence="1">Purine metabolism; GMP biosynthesis; GMP from XMP (L-Gln route): step 1/1.</text>
</comment>
<comment type="subunit">
    <text evidence="1">Heterodimer composed of a glutamine amidotransferase subunit (A) and a GMP-binding subunit (B).</text>
</comment>
<reference key="1">
    <citation type="journal article" date="2001" name="Proc. Natl. Acad. Sci. U.S.A.">
        <title>The complete genome of the crenarchaeon Sulfolobus solfataricus P2.</title>
        <authorList>
            <person name="She Q."/>
            <person name="Singh R.K."/>
            <person name="Confalonieri F."/>
            <person name="Zivanovic Y."/>
            <person name="Allard G."/>
            <person name="Awayez M.J."/>
            <person name="Chan-Weiher C.C.-Y."/>
            <person name="Clausen I.G."/>
            <person name="Curtis B.A."/>
            <person name="De Moors A."/>
            <person name="Erauso G."/>
            <person name="Fletcher C."/>
            <person name="Gordon P.M.K."/>
            <person name="Heikamp-de Jong I."/>
            <person name="Jeffries A.C."/>
            <person name="Kozera C.J."/>
            <person name="Medina N."/>
            <person name="Peng X."/>
            <person name="Thi-Ngoc H.P."/>
            <person name="Redder P."/>
            <person name="Schenk M.E."/>
            <person name="Theriault C."/>
            <person name="Tolstrup N."/>
            <person name="Charlebois R.L."/>
            <person name="Doolittle W.F."/>
            <person name="Duguet M."/>
            <person name="Gaasterland T."/>
            <person name="Garrett R.A."/>
            <person name="Ragan M.A."/>
            <person name="Sensen C.W."/>
            <person name="Van der Oost J."/>
        </authorList>
    </citation>
    <scope>NUCLEOTIDE SEQUENCE [LARGE SCALE GENOMIC DNA]</scope>
    <source>
        <strain>ATCC 35092 / DSM 1617 / JCM 11322 / P2</strain>
    </source>
</reference>
<evidence type="ECO:0000255" key="1">
    <source>
        <dbReference type="HAMAP-Rule" id="MF_01510"/>
    </source>
</evidence>
<sequence length="188" mass="21035">MKVGLVYYGGQYNHLILKNVKYLGADIEVIPPHKPVEELKKFDCVIFSGGPYSVSEEIQKMGNSPLYIKELKVPMLGICLGHQLIAYVLGGVVRRALNPEYGLTRINIFDEDTILKGFSQQLNVWESHNDEVVEPPSGFRVLASSANARVQAMANSSNSIFGVQFHPEVKHTERGIEIFKNFLGVCRK</sequence>
<keyword id="KW-0067">ATP-binding</keyword>
<keyword id="KW-0315">Glutamine amidotransferase</keyword>
<keyword id="KW-0332">GMP biosynthesis</keyword>
<keyword id="KW-0436">Ligase</keyword>
<keyword id="KW-0547">Nucleotide-binding</keyword>
<keyword id="KW-0658">Purine biosynthesis</keyword>
<keyword id="KW-1185">Reference proteome</keyword>